<sequence>MSIIEQVGAREILDSRGNPTVEVEVLLDDGSFARAAVPSGASTGEHEAVELRDGGDRYGGKGVEKAVEAVLSEIAPAIIGIDATEQRTVDQALLDADGTPDKSRLGANALLGASLAVARAAAESSGLDLFRYVGGPNAHVLPVPMMNILNGGAHADTGVDVQEFMVAPIGAATFKESLRWGAEVYHALKSVLKEKGLATGLGDEGGFAPDVAGTKEALDLISVAIGKTGLVLGTDVALALDVAATEFYTDGTGYKFEGSNRTAAEMSAFYAELVDAYPIVSIEDPLDEDDWDGWVALTDQIGNKVQLVGDDLFVTNPERLEEGIVKGAANALLVKVNQIGTLTETLDAVDLAHRNGYKTMMSHRSGETEDTTIADLAVAVGSGQIKTGAPARSERVAKYNQLLRIEENLGDAARYAGEVAFPRFAFEG</sequence>
<evidence type="ECO:0000255" key="1">
    <source>
        <dbReference type="HAMAP-Rule" id="MF_00318"/>
    </source>
</evidence>
<gene>
    <name evidence="1" type="primary">eno</name>
    <name type="ordered locus">RHA1_ro05777</name>
</gene>
<feature type="chain" id="PRO_0000267089" description="Enolase">
    <location>
        <begin position="1"/>
        <end position="428"/>
    </location>
</feature>
<feature type="active site" description="Proton donor" evidence="1">
    <location>
        <position position="204"/>
    </location>
</feature>
<feature type="active site" description="Proton acceptor" evidence="1">
    <location>
        <position position="335"/>
    </location>
</feature>
<feature type="binding site" evidence="1">
    <location>
        <position position="162"/>
    </location>
    <ligand>
        <name>(2R)-2-phosphoglycerate</name>
        <dbReference type="ChEBI" id="CHEBI:58289"/>
    </ligand>
</feature>
<feature type="binding site" evidence="1">
    <location>
        <position position="241"/>
    </location>
    <ligand>
        <name>Mg(2+)</name>
        <dbReference type="ChEBI" id="CHEBI:18420"/>
    </ligand>
</feature>
<feature type="binding site" evidence="1">
    <location>
        <position position="283"/>
    </location>
    <ligand>
        <name>Mg(2+)</name>
        <dbReference type="ChEBI" id="CHEBI:18420"/>
    </ligand>
</feature>
<feature type="binding site" evidence="1">
    <location>
        <position position="310"/>
    </location>
    <ligand>
        <name>Mg(2+)</name>
        <dbReference type="ChEBI" id="CHEBI:18420"/>
    </ligand>
</feature>
<feature type="binding site" evidence="1">
    <location>
        <position position="335"/>
    </location>
    <ligand>
        <name>(2R)-2-phosphoglycerate</name>
        <dbReference type="ChEBI" id="CHEBI:58289"/>
    </ligand>
</feature>
<feature type="binding site" evidence="1">
    <location>
        <position position="364"/>
    </location>
    <ligand>
        <name>(2R)-2-phosphoglycerate</name>
        <dbReference type="ChEBI" id="CHEBI:58289"/>
    </ligand>
</feature>
<feature type="binding site" evidence="1">
    <location>
        <position position="365"/>
    </location>
    <ligand>
        <name>(2R)-2-phosphoglycerate</name>
        <dbReference type="ChEBI" id="CHEBI:58289"/>
    </ligand>
</feature>
<feature type="binding site" evidence="1">
    <location>
        <position position="386"/>
    </location>
    <ligand>
        <name>(2R)-2-phosphoglycerate</name>
        <dbReference type="ChEBI" id="CHEBI:58289"/>
    </ligand>
</feature>
<name>ENO_RHOJR</name>
<accession>Q0S4I1</accession>
<proteinExistence type="inferred from homology"/>
<comment type="function">
    <text evidence="1">Catalyzes the reversible conversion of 2-phosphoglycerate (2-PG) into phosphoenolpyruvate (PEP). It is essential for the degradation of carbohydrates via glycolysis.</text>
</comment>
<comment type="catalytic activity">
    <reaction evidence="1">
        <text>(2R)-2-phosphoglycerate = phosphoenolpyruvate + H2O</text>
        <dbReference type="Rhea" id="RHEA:10164"/>
        <dbReference type="ChEBI" id="CHEBI:15377"/>
        <dbReference type="ChEBI" id="CHEBI:58289"/>
        <dbReference type="ChEBI" id="CHEBI:58702"/>
        <dbReference type="EC" id="4.2.1.11"/>
    </reaction>
</comment>
<comment type="cofactor">
    <cofactor evidence="1">
        <name>Mg(2+)</name>
        <dbReference type="ChEBI" id="CHEBI:18420"/>
    </cofactor>
    <text evidence="1">Binds a second Mg(2+) ion via substrate during catalysis.</text>
</comment>
<comment type="pathway">
    <text evidence="1">Carbohydrate degradation; glycolysis; pyruvate from D-glyceraldehyde 3-phosphate: step 4/5.</text>
</comment>
<comment type="subcellular location">
    <subcellularLocation>
        <location evidence="1">Cytoplasm</location>
    </subcellularLocation>
    <subcellularLocation>
        <location evidence="1">Secreted</location>
    </subcellularLocation>
    <subcellularLocation>
        <location evidence="1">Cell surface</location>
    </subcellularLocation>
    <text evidence="1">Fractions of enolase are present in both the cytoplasm and on the cell surface.</text>
</comment>
<comment type="similarity">
    <text evidence="1">Belongs to the enolase family.</text>
</comment>
<keyword id="KW-0963">Cytoplasm</keyword>
<keyword id="KW-0324">Glycolysis</keyword>
<keyword id="KW-0456">Lyase</keyword>
<keyword id="KW-0460">Magnesium</keyword>
<keyword id="KW-0479">Metal-binding</keyword>
<keyword id="KW-0964">Secreted</keyword>
<protein>
    <recommendedName>
        <fullName evidence="1">Enolase</fullName>
        <ecNumber evidence="1">4.2.1.11</ecNumber>
    </recommendedName>
    <alternativeName>
        <fullName evidence="1">2-phospho-D-glycerate hydro-lyase</fullName>
    </alternativeName>
    <alternativeName>
        <fullName evidence="1">2-phosphoglycerate dehydratase</fullName>
    </alternativeName>
</protein>
<reference key="1">
    <citation type="journal article" date="2006" name="Proc. Natl. Acad. Sci. U.S.A.">
        <title>The complete genome of Rhodococcus sp. RHA1 provides insights into a catabolic powerhouse.</title>
        <authorList>
            <person name="McLeod M.P."/>
            <person name="Warren R.L."/>
            <person name="Hsiao W.W.L."/>
            <person name="Araki N."/>
            <person name="Myhre M."/>
            <person name="Fernandes C."/>
            <person name="Miyazawa D."/>
            <person name="Wong W."/>
            <person name="Lillquist A.L."/>
            <person name="Wang D."/>
            <person name="Dosanjh M."/>
            <person name="Hara H."/>
            <person name="Petrescu A."/>
            <person name="Morin R.D."/>
            <person name="Yang G."/>
            <person name="Stott J.M."/>
            <person name="Schein J.E."/>
            <person name="Shin H."/>
            <person name="Smailus D."/>
            <person name="Siddiqui A.S."/>
            <person name="Marra M.A."/>
            <person name="Jones S.J.M."/>
            <person name="Holt R."/>
            <person name="Brinkman F.S.L."/>
            <person name="Miyauchi K."/>
            <person name="Fukuda M."/>
            <person name="Davies J.E."/>
            <person name="Mohn W.W."/>
            <person name="Eltis L.D."/>
        </authorList>
    </citation>
    <scope>NUCLEOTIDE SEQUENCE [LARGE SCALE GENOMIC DNA]</scope>
    <source>
        <strain>RHA1</strain>
    </source>
</reference>
<organism>
    <name type="scientific">Rhodococcus jostii (strain RHA1)</name>
    <dbReference type="NCBI Taxonomy" id="101510"/>
    <lineage>
        <taxon>Bacteria</taxon>
        <taxon>Bacillati</taxon>
        <taxon>Actinomycetota</taxon>
        <taxon>Actinomycetes</taxon>
        <taxon>Mycobacteriales</taxon>
        <taxon>Nocardiaceae</taxon>
        <taxon>Rhodococcus</taxon>
    </lineage>
</organism>
<dbReference type="EC" id="4.2.1.11" evidence="1"/>
<dbReference type="EMBL" id="CP000431">
    <property type="protein sequence ID" value="ABG97555.1"/>
    <property type="molecule type" value="Genomic_DNA"/>
</dbReference>
<dbReference type="RefSeq" id="WP_005238851.1">
    <property type="nucleotide sequence ID" value="NC_008268.1"/>
</dbReference>
<dbReference type="SMR" id="Q0S4I1"/>
<dbReference type="GeneID" id="69890151"/>
<dbReference type="KEGG" id="rha:RHA1_ro05777"/>
<dbReference type="eggNOG" id="COG0148">
    <property type="taxonomic scope" value="Bacteria"/>
</dbReference>
<dbReference type="HOGENOM" id="CLU_031223_2_1_11"/>
<dbReference type="OrthoDB" id="9804716at2"/>
<dbReference type="UniPathway" id="UPA00109">
    <property type="reaction ID" value="UER00187"/>
</dbReference>
<dbReference type="Proteomes" id="UP000008710">
    <property type="component" value="Chromosome"/>
</dbReference>
<dbReference type="GO" id="GO:0009986">
    <property type="term" value="C:cell surface"/>
    <property type="evidence" value="ECO:0007669"/>
    <property type="project" value="UniProtKB-SubCell"/>
</dbReference>
<dbReference type="GO" id="GO:0005576">
    <property type="term" value="C:extracellular region"/>
    <property type="evidence" value="ECO:0007669"/>
    <property type="project" value="UniProtKB-SubCell"/>
</dbReference>
<dbReference type="GO" id="GO:0000015">
    <property type="term" value="C:phosphopyruvate hydratase complex"/>
    <property type="evidence" value="ECO:0007669"/>
    <property type="project" value="InterPro"/>
</dbReference>
<dbReference type="GO" id="GO:0000287">
    <property type="term" value="F:magnesium ion binding"/>
    <property type="evidence" value="ECO:0007669"/>
    <property type="project" value="UniProtKB-UniRule"/>
</dbReference>
<dbReference type="GO" id="GO:0004634">
    <property type="term" value="F:phosphopyruvate hydratase activity"/>
    <property type="evidence" value="ECO:0007669"/>
    <property type="project" value="UniProtKB-UniRule"/>
</dbReference>
<dbReference type="GO" id="GO:0006096">
    <property type="term" value="P:glycolytic process"/>
    <property type="evidence" value="ECO:0007669"/>
    <property type="project" value="UniProtKB-UniRule"/>
</dbReference>
<dbReference type="CDD" id="cd03313">
    <property type="entry name" value="enolase"/>
    <property type="match status" value="1"/>
</dbReference>
<dbReference type="FunFam" id="3.20.20.120:FF:000001">
    <property type="entry name" value="Enolase"/>
    <property type="match status" value="1"/>
</dbReference>
<dbReference type="FunFam" id="3.30.390.10:FF:000001">
    <property type="entry name" value="Enolase"/>
    <property type="match status" value="1"/>
</dbReference>
<dbReference type="Gene3D" id="3.20.20.120">
    <property type="entry name" value="Enolase-like C-terminal domain"/>
    <property type="match status" value="1"/>
</dbReference>
<dbReference type="Gene3D" id="3.30.390.10">
    <property type="entry name" value="Enolase-like, N-terminal domain"/>
    <property type="match status" value="1"/>
</dbReference>
<dbReference type="HAMAP" id="MF_00318">
    <property type="entry name" value="Enolase"/>
    <property type="match status" value="1"/>
</dbReference>
<dbReference type="InterPro" id="IPR000941">
    <property type="entry name" value="Enolase"/>
</dbReference>
<dbReference type="InterPro" id="IPR036849">
    <property type="entry name" value="Enolase-like_C_sf"/>
</dbReference>
<dbReference type="InterPro" id="IPR029017">
    <property type="entry name" value="Enolase-like_N"/>
</dbReference>
<dbReference type="InterPro" id="IPR020810">
    <property type="entry name" value="Enolase_C"/>
</dbReference>
<dbReference type="InterPro" id="IPR020809">
    <property type="entry name" value="Enolase_CS"/>
</dbReference>
<dbReference type="InterPro" id="IPR020811">
    <property type="entry name" value="Enolase_N"/>
</dbReference>
<dbReference type="NCBIfam" id="TIGR01060">
    <property type="entry name" value="eno"/>
    <property type="match status" value="1"/>
</dbReference>
<dbReference type="PANTHER" id="PTHR11902">
    <property type="entry name" value="ENOLASE"/>
    <property type="match status" value="1"/>
</dbReference>
<dbReference type="PANTHER" id="PTHR11902:SF1">
    <property type="entry name" value="ENOLASE"/>
    <property type="match status" value="1"/>
</dbReference>
<dbReference type="Pfam" id="PF00113">
    <property type="entry name" value="Enolase_C"/>
    <property type="match status" value="1"/>
</dbReference>
<dbReference type="Pfam" id="PF03952">
    <property type="entry name" value="Enolase_N"/>
    <property type="match status" value="1"/>
</dbReference>
<dbReference type="PIRSF" id="PIRSF001400">
    <property type="entry name" value="Enolase"/>
    <property type="match status" value="1"/>
</dbReference>
<dbReference type="PRINTS" id="PR00148">
    <property type="entry name" value="ENOLASE"/>
</dbReference>
<dbReference type="SFLD" id="SFLDS00001">
    <property type="entry name" value="Enolase"/>
    <property type="match status" value="1"/>
</dbReference>
<dbReference type="SFLD" id="SFLDF00002">
    <property type="entry name" value="enolase"/>
    <property type="match status" value="1"/>
</dbReference>
<dbReference type="SMART" id="SM01192">
    <property type="entry name" value="Enolase_C"/>
    <property type="match status" value="1"/>
</dbReference>
<dbReference type="SMART" id="SM01193">
    <property type="entry name" value="Enolase_N"/>
    <property type="match status" value="1"/>
</dbReference>
<dbReference type="SUPFAM" id="SSF51604">
    <property type="entry name" value="Enolase C-terminal domain-like"/>
    <property type="match status" value="1"/>
</dbReference>
<dbReference type="SUPFAM" id="SSF54826">
    <property type="entry name" value="Enolase N-terminal domain-like"/>
    <property type="match status" value="1"/>
</dbReference>
<dbReference type="PROSITE" id="PS00164">
    <property type="entry name" value="ENOLASE"/>
    <property type="match status" value="1"/>
</dbReference>